<accession>B1I1Y5</accession>
<protein>
    <recommendedName>
        <fullName evidence="1">Phosphoglucosamine mutase</fullName>
        <ecNumber evidence="1">5.4.2.10</ecNumber>
    </recommendedName>
</protein>
<reference key="1">
    <citation type="submission" date="2007-10" db="EMBL/GenBank/DDBJ databases">
        <title>Complete sequence of chromosome of Desulforudis audaxviator MP104C.</title>
        <authorList>
            <person name="Copeland A."/>
            <person name="Lucas S."/>
            <person name="Lapidus A."/>
            <person name="Barry K."/>
            <person name="Glavina del Rio T."/>
            <person name="Dalin E."/>
            <person name="Tice H."/>
            <person name="Bruce D."/>
            <person name="Pitluck S."/>
            <person name="Lowry S.R."/>
            <person name="Larimer F."/>
            <person name="Land M.L."/>
            <person name="Hauser L."/>
            <person name="Kyrpides N."/>
            <person name="Ivanova N.N."/>
            <person name="Richardson P."/>
        </authorList>
    </citation>
    <scope>NUCLEOTIDE SEQUENCE [LARGE SCALE GENOMIC DNA]</scope>
    <source>
        <strain>MP104C</strain>
    </source>
</reference>
<dbReference type="EC" id="5.4.2.10" evidence="1"/>
<dbReference type="EMBL" id="CP000860">
    <property type="protein sequence ID" value="ACA58917.1"/>
    <property type="status" value="ALT_INIT"/>
    <property type="molecule type" value="Genomic_DNA"/>
</dbReference>
<dbReference type="RefSeq" id="WP_041571045.1">
    <property type="nucleotide sequence ID" value="NC_010424.1"/>
</dbReference>
<dbReference type="SMR" id="B1I1Y5"/>
<dbReference type="STRING" id="477974.Daud_0359"/>
<dbReference type="KEGG" id="dau:Daud_0359"/>
<dbReference type="eggNOG" id="COG1109">
    <property type="taxonomic scope" value="Bacteria"/>
</dbReference>
<dbReference type="HOGENOM" id="CLU_016950_7_0_9"/>
<dbReference type="OrthoDB" id="9806956at2"/>
<dbReference type="Proteomes" id="UP000008544">
    <property type="component" value="Chromosome"/>
</dbReference>
<dbReference type="GO" id="GO:0005829">
    <property type="term" value="C:cytosol"/>
    <property type="evidence" value="ECO:0007669"/>
    <property type="project" value="TreeGrafter"/>
</dbReference>
<dbReference type="GO" id="GO:0000287">
    <property type="term" value="F:magnesium ion binding"/>
    <property type="evidence" value="ECO:0007669"/>
    <property type="project" value="UniProtKB-UniRule"/>
</dbReference>
<dbReference type="GO" id="GO:0008966">
    <property type="term" value="F:phosphoglucosamine mutase activity"/>
    <property type="evidence" value="ECO:0007669"/>
    <property type="project" value="UniProtKB-UniRule"/>
</dbReference>
<dbReference type="GO" id="GO:0004615">
    <property type="term" value="F:phosphomannomutase activity"/>
    <property type="evidence" value="ECO:0007669"/>
    <property type="project" value="TreeGrafter"/>
</dbReference>
<dbReference type="GO" id="GO:0005975">
    <property type="term" value="P:carbohydrate metabolic process"/>
    <property type="evidence" value="ECO:0007669"/>
    <property type="project" value="InterPro"/>
</dbReference>
<dbReference type="GO" id="GO:0009252">
    <property type="term" value="P:peptidoglycan biosynthetic process"/>
    <property type="evidence" value="ECO:0007669"/>
    <property type="project" value="TreeGrafter"/>
</dbReference>
<dbReference type="GO" id="GO:0006048">
    <property type="term" value="P:UDP-N-acetylglucosamine biosynthetic process"/>
    <property type="evidence" value="ECO:0007669"/>
    <property type="project" value="TreeGrafter"/>
</dbReference>
<dbReference type="CDD" id="cd05802">
    <property type="entry name" value="GlmM"/>
    <property type="match status" value="1"/>
</dbReference>
<dbReference type="FunFam" id="3.30.310.50:FF:000001">
    <property type="entry name" value="Phosphoglucosamine mutase"/>
    <property type="match status" value="1"/>
</dbReference>
<dbReference type="FunFam" id="3.40.120.10:FF:000001">
    <property type="entry name" value="Phosphoglucosamine mutase"/>
    <property type="match status" value="1"/>
</dbReference>
<dbReference type="FunFam" id="3.40.120.10:FF:000002">
    <property type="entry name" value="Phosphoglucosamine mutase"/>
    <property type="match status" value="1"/>
</dbReference>
<dbReference type="Gene3D" id="3.40.120.10">
    <property type="entry name" value="Alpha-D-Glucose-1,6-Bisphosphate, subunit A, domain 3"/>
    <property type="match status" value="3"/>
</dbReference>
<dbReference type="Gene3D" id="3.30.310.50">
    <property type="entry name" value="Alpha-D-phosphohexomutase, C-terminal domain"/>
    <property type="match status" value="1"/>
</dbReference>
<dbReference type="HAMAP" id="MF_01554_B">
    <property type="entry name" value="GlmM_B"/>
    <property type="match status" value="1"/>
</dbReference>
<dbReference type="InterPro" id="IPR005844">
    <property type="entry name" value="A-D-PHexomutase_a/b/a-I"/>
</dbReference>
<dbReference type="InterPro" id="IPR016055">
    <property type="entry name" value="A-D-PHexomutase_a/b/a-I/II/III"/>
</dbReference>
<dbReference type="InterPro" id="IPR005845">
    <property type="entry name" value="A-D-PHexomutase_a/b/a-II"/>
</dbReference>
<dbReference type="InterPro" id="IPR005846">
    <property type="entry name" value="A-D-PHexomutase_a/b/a-III"/>
</dbReference>
<dbReference type="InterPro" id="IPR005843">
    <property type="entry name" value="A-D-PHexomutase_C"/>
</dbReference>
<dbReference type="InterPro" id="IPR036900">
    <property type="entry name" value="A-D-PHexomutase_C_sf"/>
</dbReference>
<dbReference type="InterPro" id="IPR016066">
    <property type="entry name" value="A-D-PHexomutase_CS"/>
</dbReference>
<dbReference type="InterPro" id="IPR005841">
    <property type="entry name" value="Alpha-D-phosphohexomutase_SF"/>
</dbReference>
<dbReference type="InterPro" id="IPR006352">
    <property type="entry name" value="GlmM_bact"/>
</dbReference>
<dbReference type="InterPro" id="IPR050060">
    <property type="entry name" value="Phosphoglucosamine_mutase"/>
</dbReference>
<dbReference type="NCBIfam" id="TIGR01455">
    <property type="entry name" value="glmM"/>
    <property type="match status" value="1"/>
</dbReference>
<dbReference type="NCBIfam" id="NF008139">
    <property type="entry name" value="PRK10887.1"/>
    <property type="match status" value="1"/>
</dbReference>
<dbReference type="PANTHER" id="PTHR42946:SF1">
    <property type="entry name" value="PHOSPHOGLUCOMUTASE (ALPHA-D-GLUCOSE-1,6-BISPHOSPHATE-DEPENDENT)"/>
    <property type="match status" value="1"/>
</dbReference>
<dbReference type="PANTHER" id="PTHR42946">
    <property type="entry name" value="PHOSPHOHEXOSE MUTASE"/>
    <property type="match status" value="1"/>
</dbReference>
<dbReference type="Pfam" id="PF02878">
    <property type="entry name" value="PGM_PMM_I"/>
    <property type="match status" value="1"/>
</dbReference>
<dbReference type="Pfam" id="PF02879">
    <property type="entry name" value="PGM_PMM_II"/>
    <property type="match status" value="1"/>
</dbReference>
<dbReference type="Pfam" id="PF02880">
    <property type="entry name" value="PGM_PMM_III"/>
    <property type="match status" value="1"/>
</dbReference>
<dbReference type="Pfam" id="PF00408">
    <property type="entry name" value="PGM_PMM_IV"/>
    <property type="match status" value="1"/>
</dbReference>
<dbReference type="PRINTS" id="PR00509">
    <property type="entry name" value="PGMPMM"/>
</dbReference>
<dbReference type="SUPFAM" id="SSF55957">
    <property type="entry name" value="Phosphoglucomutase, C-terminal domain"/>
    <property type="match status" value="1"/>
</dbReference>
<dbReference type="SUPFAM" id="SSF53738">
    <property type="entry name" value="Phosphoglucomutase, first 3 domains"/>
    <property type="match status" value="3"/>
</dbReference>
<dbReference type="PROSITE" id="PS00710">
    <property type="entry name" value="PGM_PMM"/>
    <property type="match status" value="1"/>
</dbReference>
<gene>
    <name evidence="1" type="primary">glmM</name>
    <name type="ordered locus">Daud_0359</name>
</gene>
<name>GLMM_DESAP</name>
<keyword id="KW-0413">Isomerase</keyword>
<keyword id="KW-0460">Magnesium</keyword>
<keyword id="KW-0479">Metal-binding</keyword>
<keyword id="KW-0597">Phosphoprotein</keyword>
<keyword id="KW-1185">Reference proteome</keyword>
<sequence length="450" mass="47905">MGALFGTDGVRGLANEELSPELAFKLGRAGAFVLQEETGARALVIGRDTRLSGDMLEAALVAGICSVGVDVIRVGVLPTPAIAYLSRAPEAGGGVVISASHNPYEDNGIKFFGANGYKLPDRLEDRIEHLVLTAGGALPTPSGIGVGRVREMPDAMERYVRFACGTGPSDLAGLKIVVDCANGAAYQVAPQVLGRLGASVVPLFDTPDGTNINAGCGSTHPHVLQQAVPAEGADLGLAFDGDADRLIAVDEHGRLVDGDHLLVICGRHMRRHGRLAGNTMVVTVMSNLGLHLALREAGIRVLQTKVGDRYVLEEMLRSGCCLGGEQSGHIIFTEYNTTGDGIITALQLLKVMRETGRPLSQLAAQMERLPQLLENVRVRDRNAVMSSPALWEAIARYEHGLNGEGRILVRPSGTEPLVRVMAEARNETLLTKVVEELVRVVTEIDRQQAG</sequence>
<comment type="function">
    <text evidence="1">Catalyzes the conversion of glucosamine-6-phosphate to glucosamine-1-phosphate.</text>
</comment>
<comment type="catalytic activity">
    <reaction evidence="1">
        <text>alpha-D-glucosamine 1-phosphate = D-glucosamine 6-phosphate</text>
        <dbReference type="Rhea" id="RHEA:23424"/>
        <dbReference type="ChEBI" id="CHEBI:58516"/>
        <dbReference type="ChEBI" id="CHEBI:58725"/>
        <dbReference type="EC" id="5.4.2.10"/>
    </reaction>
</comment>
<comment type="cofactor">
    <cofactor evidence="1">
        <name>Mg(2+)</name>
        <dbReference type="ChEBI" id="CHEBI:18420"/>
    </cofactor>
    <text evidence="1">Binds 1 Mg(2+) ion per subunit.</text>
</comment>
<comment type="PTM">
    <text evidence="1">Activated by phosphorylation.</text>
</comment>
<comment type="similarity">
    <text evidence="1">Belongs to the phosphohexose mutase family.</text>
</comment>
<comment type="sequence caution" evidence="2">
    <conflict type="erroneous initiation">
        <sequence resource="EMBL-CDS" id="ACA58917"/>
    </conflict>
</comment>
<evidence type="ECO:0000255" key="1">
    <source>
        <dbReference type="HAMAP-Rule" id="MF_01554"/>
    </source>
</evidence>
<evidence type="ECO:0000305" key="2"/>
<proteinExistence type="inferred from homology"/>
<feature type="chain" id="PRO_0000343588" description="Phosphoglucosamine mutase">
    <location>
        <begin position="1"/>
        <end position="450"/>
    </location>
</feature>
<feature type="active site" description="Phosphoserine intermediate" evidence="1">
    <location>
        <position position="100"/>
    </location>
</feature>
<feature type="binding site" description="via phosphate group" evidence="1">
    <location>
        <position position="100"/>
    </location>
    <ligand>
        <name>Mg(2+)</name>
        <dbReference type="ChEBI" id="CHEBI:18420"/>
    </ligand>
</feature>
<feature type="binding site" evidence="1">
    <location>
        <position position="240"/>
    </location>
    <ligand>
        <name>Mg(2+)</name>
        <dbReference type="ChEBI" id="CHEBI:18420"/>
    </ligand>
</feature>
<feature type="binding site" evidence="1">
    <location>
        <position position="242"/>
    </location>
    <ligand>
        <name>Mg(2+)</name>
        <dbReference type="ChEBI" id="CHEBI:18420"/>
    </ligand>
</feature>
<feature type="binding site" evidence="1">
    <location>
        <position position="244"/>
    </location>
    <ligand>
        <name>Mg(2+)</name>
        <dbReference type="ChEBI" id="CHEBI:18420"/>
    </ligand>
</feature>
<feature type="modified residue" description="Phosphoserine" evidence="1">
    <location>
        <position position="100"/>
    </location>
</feature>
<organism>
    <name type="scientific">Desulforudis audaxviator (strain MP104C)</name>
    <dbReference type="NCBI Taxonomy" id="477974"/>
    <lineage>
        <taxon>Bacteria</taxon>
        <taxon>Bacillati</taxon>
        <taxon>Bacillota</taxon>
        <taxon>Clostridia</taxon>
        <taxon>Thermoanaerobacterales</taxon>
        <taxon>Candidatus Desulforudaceae</taxon>
        <taxon>Candidatus Desulforudis</taxon>
    </lineage>
</organism>